<evidence type="ECO:0000255" key="1">
    <source>
        <dbReference type="HAMAP-Rule" id="MF_00251"/>
    </source>
</evidence>
<evidence type="ECO:0000305" key="2"/>
<name>RL36_CHLAA</name>
<protein>
    <recommendedName>
        <fullName evidence="1">Large ribosomal subunit protein bL36</fullName>
    </recommendedName>
    <alternativeName>
        <fullName evidence="2">50S ribosomal protein L36</fullName>
    </alternativeName>
</protein>
<reference key="1">
    <citation type="journal article" date="2011" name="BMC Genomics">
        <title>Complete genome sequence of the filamentous anoxygenic phototrophic bacterium Chloroflexus aurantiacus.</title>
        <authorList>
            <person name="Tang K.H."/>
            <person name="Barry K."/>
            <person name="Chertkov O."/>
            <person name="Dalin E."/>
            <person name="Han C.S."/>
            <person name="Hauser L.J."/>
            <person name="Honchak B.M."/>
            <person name="Karbach L.E."/>
            <person name="Land M.L."/>
            <person name="Lapidus A."/>
            <person name="Larimer F.W."/>
            <person name="Mikhailova N."/>
            <person name="Pitluck S."/>
            <person name="Pierson B.K."/>
            <person name="Blankenship R.E."/>
        </authorList>
    </citation>
    <scope>NUCLEOTIDE SEQUENCE [LARGE SCALE GENOMIC DNA]</scope>
    <source>
        <strain>ATCC 29366 / DSM 635 / J-10-fl</strain>
    </source>
</reference>
<comment type="similarity">
    <text evidence="1">Belongs to the bacterial ribosomal protein bL36 family.</text>
</comment>
<keyword id="KW-1185">Reference proteome</keyword>
<keyword id="KW-0687">Ribonucleoprotein</keyword>
<keyword id="KW-0689">Ribosomal protein</keyword>
<sequence length="38" mass="4468">MKVRASVKPRCEYCKVIKRKGVIRVICSRTPKHKQRQG</sequence>
<feature type="chain" id="PRO_1000078466" description="Large ribosomal subunit protein bL36">
    <location>
        <begin position="1"/>
        <end position="38"/>
    </location>
</feature>
<proteinExistence type="inferred from homology"/>
<accession>A9WH89</accession>
<gene>
    <name evidence="1" type="primary">rpmJ</name>
    <name type="ordered locus">Caur_2392</name>
</gene>
<organism>
    <name type="scientific">Chloroflexus aurantiacus (strain ATCC 29366 / DSM 635 / J-10-fl)</name>
    <dbReference type="NCBI Taxonomy" id="324602"/>
    <lineage>
        <taxon>Bacteria</taxon>
        <taxon>Bacillati</taxon>
        <taxon>Chloroflexota</taxon>
        <taxon>Chloroflexia</taxon>
        <taxon>Chloroflexales</taxon>
        <taxon>Chloroflexineae</taxon>
        <taxon>Chloroflexaceae</taxon>
        <taxon>Chloroflexus</taxon>
    </lineage>
</organism>
<dbReference type="EMBL" id="CP000909">
    <property type="protein sequence ID" value="ABY35601.1"/>
    <property type="molecule type" value="Genomic_DNA"/>
</dbReference>
<dbReference type="RefSeq" id="WP_012258254.1">
    <property type="nucleotide sequence ID" value="NC_010175.1"/>
</dbReference>
<dbReference type="RefSeq" id="YP_001635990.1">
    <property type="nucleotide sequence ID" value="NC_010175.1"/>
</dbReference>
<dbReference type="SMR" id="A9WH89"/>
<dbReference type="FunCoup" id="A9WH89">
    <property type="interactions" value="120"/>
</dbReference>
<dbReference type="STRING" id="324602.Caur_2392"/>
<dbReference type="EnsemblBacteria" id="ABY35601">
    <property type="protein sequence ID" value="ABY35601"/>
    <property type="gene ID" value="Caur_2392"/>
</dbReference>
<dbReference type="KEGG" id="cau:Caur_2392"/>
<dbReference type="PATRIC" id="fig|324602.8.peg.2706"/>
<dbReference type="eggNOG" id="COG0257">
    <property type="taxonomic scope" value="Bacteria"/>
</dbReference>
<dbReference type="HOGENOM" id="CLU_135723_6_2_0"/>
<dbReference type="InParanoid" id="A9WH89"/>
<dbReference type="Proteomes" id="UP000002008">
    <property type="component" value="Chromosome"/>
</dbReference>
<dbReference type="GO" id="GO:0005737">
    <property type="term" value="C:cytoplasm"/>
    <property type="evidence" value="ECO:0007669"/>
    <property type="project" value="UniProtKB-ARBA"/>
</dbReference>
<dbReference type="GO" id="GO:1990904">
    <property type="term" value="C:ribonucleoprotein complex"/>
    <property type="evidence" value="ECO:0007669"/>
    <property type="project" value="UniProtKB-KW"/>
</dbReference>
<dbReference type="GO" id="GO:0005840">
    <property type="term" value="C:ribosome"/>
    <property type="evidence" value="ECO:0007669"/>
    <property type="project" value="UniProtKB-KW"/>
</dbReference>
<dbReference type="GO" id="GO:0003735">
    <property type="term" value="F:structural constituent of ribosome"/>
    <property type="evidence" value="ECO:0007669"/>
    <property type="project" value="InterPro"/>
</dbReference>
<dbReference type="GO" id="GO:0006412">
    <property type="term" value="P:translation"/>
    <property type="evidence" value="ECO:0007669"/>
    <property type="project" value="UniProtKB-UniRule"/>
</dbReference>
<dbReference type="HAMAP" id="MF_00251">
    <property type="entry name" value="Ribosomal_bL36"/>
    <property type="match status" value="1"/>
</dbReference>
<dbReference type="InterPro" id="IPR000473">
    <property type="entry name" value="Ribosomal_bL36"/>
</dbReference>
<dbReference type="InterPro" id="IPR035977">
    <property type="entry name" value="Ribosomal_bL36_sp"/>
</dbReference>
<dbReference type="NCBIfam" id="TIGR01022">
    <property type="entry name" value="rpmJ_bact"/>
    <property type="match status" value="1"/>
</dbReference>
<dbReference type="PANTHER" id="PTHR42888">
    <property type="entry name" value="50S RIBOSOMAL PROTEIN L36, CHLOROPLASTIC"/>
    <property type="match status" value="1"/>
</dbReference>
<dbReference type="PANTHER" id="PTHR42888:SF1">
    <property type="entry name" value="LARGE RIBOSOMAL SUBUNIT PROTEIN BL36C"/>
    <property type="match status" value="1"/>
</dbReference>
<dbReference type="Pfam" id="PF00444">
    <property type="entry name" value="Ribosomal_L36"/>
    <property type="match status" value="1"/>
</dbReference>
<dbReference type="SUPFAM" id="SSF57840">
    <property type="entry name" value="Ribosomal protein L36"/>
    <property type="match status" value="1"/>
</dbReference>
<dbReference type="PROSITE" id="PS00828">
    <property type="entry name" value="RIBOSOMAL_L36"/>
    <property type="match status" value="1"/>
</dbReference>